<accession>Q6G4D2</accession>
<dbReference type="EC" id="3.1.11.6" evidence="1"/>
<dbReference type="EMBL" id="BX897699">
    <property type="protein sequence ID" value="CAF27243.1"/>
    <property type="molecule type" value="Genomic_DNA"/>
</dbReference>
<dbReference type="RefSeq" id="WP_011180367.1">
    <property type="nucleotide sequence ID" value="NZ_LRIJ02000001.1"/>
</dbReference>
<dbReference type="SMR" id="Q6G4D2"/>
<dbReference type="PaxDb" id="283166-BH04340"/>
<dbReference type="EnsemblBacteria" id="CAF27243">
    <property type="protein sequence ID" value="CAF27243"/>
    <property type="gene ID" value="BH04340"/>
</dbReference>
<dbReference type="KEGG" id="bhe:BH04340"/>
<dbReference type="eggNOG" id="COG1722">
    <property type="taxonomic scope" value="Bacteria"/>
</dbReference>
<dbReference type="OrthoDB" id="9808145at2"/>
<dbReference type="Proteomes" id="UP000000421">
    <property type="component" value="Chromosome"/>
</dbReference>
<dbReference type="GO" id="GO:0005829">
    <property type="term" value="C:cytosol"/>
    <property type="evidence" value="ECO:0007669"/>
    <property type="project" value="TreeGrafter"/>
</dbReference>
<dbReference type="GO" id="GO:0009318">
    <property type="term" value="C:exodeoxyribonuclease VII complex"/>
    <property type="evidence" value="ECO:0007669"/>
    <property type="project" value="InterPro"/>
</dbReference>
<dbReference type="GO" id="GO:0008855">
    <property type="term" value="F:exodeoxyribonuclease VII activity"/>
    <property type="evidence" value="ECO:0007669"/>
    <property type="project" value="UniProtKB-UniRule"/>
</dbReference>
<dbReference type="GO" id="GO:0006308">
    <property type="term" value="P:DNA catabolic process"/>
    <property type="evidence" value="ECO:0007669"/>
    <property type="project" value="UniProtKB-UniRule"/>
</dbReference>
<dbReference type="Gene3D" id="1.10.287.1040">
    <property type="entry name" value="Exonuclease VII, small subunit"/>
    <property type="match status" value="1"/>
</dbReference>
<dbReference type="HAMAP" id="MF_00337">
    <property type="entry name" value="Exonuc_7_S"/>
    <property type="match status" value="1"/>
</dbReference>
<dbReference type="InterPro" id="IPR003761">
    <property type="entry name" value="Exonuc_VII_S"/>
</dbReference>
<dbReference type="InterPro" id="IPR037004">
    <property type="entry name" value="Exonuc_VII_ssu_sf"/>
</dbReference>
<dbReference type="NCBIfam" id="NF002139">
    <property type="entry name" value="PRK00977.1-3"/>
    <property type="match status" value="1"/>
</dbReference>
<dbReference type="NCBIfam" id="NF002140">
    <property type="entry name" value="PRK00977.1-4"/>
    <property type="match status" value="1"/>
</dbReference>
<dbReference type="NCBIfam" id="TIGR01280">
    <property type="entry name" value="xseB"/>
    <property type="match status" value="1"/>
</dbReference>
<dbReference type="PANTHER" id="PTHR34137">
    <property type="entry name" value="EXODEOXYRIBONUCLEASE 7 SMALL SUBUNIT"/>
    <property type="match status" value="1"/>
</dbReference>
<dbReference type="PANTHER" id="PTHR34137:SF1">
    <property type="entry name" value="EXODEOXYRIBONUCLEASE 7 SMALL SUBUNIT"/>
    <property type="match status" value="1"/>
</dbReference>
<dbReference type="Pfam" id="PF02609">
    <property type="entry name" value="Exonuc_VII_S"/>
    <property type="match status" value="1"/>
</dbReference>
<dbReference type="SUPFAM" id="SSF116842">
    <property type="entry name" value="XseB-like"/>
    <property type="match status" value="1"/>
</dbReference>
<sequence>MKQEIQKGDVATLSFEQALKQLEVIVENLERGDVPLEQSIDIYERGEALKKHCEKLLKAAEAKVEKIQLSEGGTPEGVEPLDSE</sequence>
<organism>
    <name type="scientific">Bartonella henselae (strain ATCC 49882 / DSM 28221 / CCUG 30454 / Houston 1)</name>
    <name type="common">Rochalimaea henselae</name>
    <dbReference type="NCBI Taxonomy" id="283166"/>
    <lineage>
        <taxon>Bacteria</taxon>
        <taxon>Pseudomonadati</taxon>
        <taxon>Pseudomonadota</taxon>
        <taxon>Alphaproteobacteria</taxon>
        <taxon>Hyphomicrobiales</taxon>
        <taxon>Bartonellaceae</taxon>
        <taxon>Bartonella</taxon>
    </lineage>
</organism>
<protein>
    <recommendedName>
        <fullName evidence="1">Exodeoxyribonuclease 7 small subunit</fullName>
        <ecNumber evidence="1">3.1.11.6</ecNumber>
    </recommendedName>
    <alternativeName>
        <fullName evidence="1">Exodeoxyribonuclease VII small subunit</fullName>
        <shortName evidence="1">Exonuclease VII small subunit</shortName>
    </alternativeName>
</protein>
<proteinExistence type="inferred from homology"/>
<keyword id="KW-0963">Cytoplasm</keyword>
<keyword id="KW-0269">Exonuclease</keyword>
<keyword id="KW-0378">Hydrolase</keyword>
<keyword id="KW-0540">Nuclease</keyword>
<evidence type="ECO:0000255" key="1">
    <source>
        <dbReference type="HAMAP-Rule" id="MF_00337"/>
    </source>
</evidence>
<comment type="function">
    <text evidence="1">Bidirectionally degrades single-stranded DNA into large acid-insoluble oligonucleotides, which are then degraded further into small acid-soluble oligonucleotides.</text>
</comment>
<comment type="catalytic activity">
    <reaction evidence="1">
        <text>Exonucleolytic cleavage in either 5'- to 3'- or 3'- to 5'-direction to yield nucleoside 5'-phosphates.</text>
        <dbReference type="EC" id="3.1.11.6"/>
    </reaction>
</comment>
<comment type="subunit">
    <text evidence="1">Heterooligomer composed of large and small subunits.</text>
</comment>
<comment type="subcellular location">
    <subcellularLocation>
        <location evidence="1">Cytoplasm</location>
    </subcellularLocation>
</comment>
<comment type="similarity">
    <text evidence="1">Belongs to the XseB family.</text>
</comment>
<reference key="1">
    <citation type="journal article" date="2004" name="Proc. Natl. Acad. Sci. U.S.A.">
        <title>The louse-borne human pathogen Bartonella quintana is a genomic derivative of the zoonotic agent Bartonella henselae.</title>
        <authorList>
            <person name="Alsmark U.C.M."/>
            <person name="Frank A.C."/>
            <person name="Karlberg E.O."/>
            <person name="Legault B.-A."/>
            <person name="Ardell D.H."/>
            <person name="Canbaeck B."/>
            <person name="Eriksson A.-S."/>
            <person name="Naeslund A.K."/>
            <person name="Handley S.A."/>
            <person name="Huvet M."/>
            <person name="La Scola B."/>
            <person name="Holmberg M."/>
            <person name="Andersson S.G.E."/>
        </authorList>
    </citation>
    <scope>NUCLEOTIDE SEQUENCE [LARGE SCALE GENOMIC DNA]</scope>
    <source>
        <strain>ATCC 49882 / DSM 28221 / CCUG 30454 / Houston 1</strain>
    </source>
</reference>
<feature type="chain" id="PRO_0000206922" description="Exodeoxyribonuclease 7 small subunit">
    <location>
        <begin position="1"/>
        <end position="84"/>
    </location>
</feature>
<name>EX7S_BARHE</name>
<gene>
    <name evidence="1" type="primary">xseB</name>
    <name type="ordered locus">BH04340</name>
</gene>